<sequence length="899" mass="103023">MAKKKSKSRSKSSRRVLDALQLAEREINGEFDNSSDNDKRHDARRNGTVVNLLKRSKGDTNSDEDDIDSESFEDEELNSDEALGSDDDYDILNSKFSQTIRDKKENANYQEEEDEGGYTSIDEEDLMPLSQVWDMDEKTAQSNGNDDEDASPQLKLQDTDISSESSSSEESESESEDDEEEEDPFDEISEDEEDIELNTITSKLIDETKSKAPKRLDTYGSGEANEYVLPSANAASGASGKLSLTDMMNVIDDRQVIENANLLKGKSSTYEVPLPQRIQQRHDRKAAYEISRQEVSKWNDIVQQNRRADHLIFPLNKPTEHNHASAFTRTQDVPQTELQEKVDQVLQESNLANPEKDSKFEELSTAKMTPEEMRKRTTEMRLMRELMFREERKARRLKKIKSKTYRKIKKKELMKNRELAAVSSDEDNEDHDIARAKERMTLKHKTNSKWAKDMIKHGMTNDAETREEMEEMLRQGERLKAKMLDRNSDDEEDGRVQTLSDVENEEKENIDSEALKSKLGKTGVMNMAFMKNGEAREREANKETLRQLRAVENGDDIKLFESDEEETNGENIQINKGRRIYTPGSLESNKDMNELNDHTRKENKVDESRSLENRLRAKNSGQSKNARTNAEGAIIVEEESDGEPLQDGQNNQQDEEAKDVNPWLANESDEEHTVKKQSSKVNVIDKDSSKNVKAMNKMEKAELKQKKKKKGKSNDDEDLLLTADDSTRLKIVDPYGGSDDEQGDNVFMFKQQDVIAEAFAGDDVVAEFQEEKKRVIDDEDDKEVDTTLPGWGEWAGAGSKPKNKKRKFIKKVKGVVNKDKRRDKNLQNVIINEKVNKKNLKYQSSAVPFPFENREQYERSLRMPIGQEWTSRASHQELIKPRIMTKPGQVIDPLKAPFK</sequence>
<reference key="1">
    <citation type="journal article" date="1997" name="Nature">
        <title>The nucleotide sequence of Saccharomyces cerevisiae chromosome XIII.</title>
        <authorList>
            <person name="Bowman S."/>
            <person name="Churcher C.M."/>
            <person name="Badcock K."/>
            <person name="Brown D."/>
            <person name="Chillingworth T."/>
            <person name="Connor R."/>
            <person name="Dedman K."/>
            <person name="Devlin K."/>
            <person name="Gentles S."/>
            <person name="Hamlin N."/>
            <person name="Hunt S."/>
            <person name="Jagels K."/>
            <person name="Lye G."/>
            <person name="Moule S."/>
            <person name="Odell C."/>
            <person name="Pearson D."/>
            <person name="Rajandream M.A."/>
            <person name="Rice P."/>
            <person name="Skelton J."/>
            <person name="Walsh S.V."/>
            <person name="Whitehead S."/>
            <person name="Barrell B.G."/>
        </authorList>
    </citation>
    <scope>NUCLEOTIDE SEQUENCE [LARGE SCALE GENOMIC DNA]</scope>
    <source>
        <strain>ATCC 204508 / S288c</strain>
    </source>
</reference>
<reference key="2">
    <citation type="journal article" date="2014" name="G3 (Bethesda)">
        <title>The reference genome sequence of Saccharomyces cerevisiae: Then and now.</title>
        <authorList>
            <person name="Engel S.R."/>
            <person name="Dietrich F.S."/>
            <person name="Fisk D.G."/>
            <person name="Binkley G."/>
            <person name="Balakrishnan R."/>
            <person name="Costanzo M.C."/>
            <person name="Dwight S.S."/>
            <person name="Hitz B.C."/>
            <person name="Karra K."/>
            <person name="Nash R.S."/>
            <person name="Weng S."/>
            <person name="Wong E.D."/>
            <person name="Lloyd P."/>
            <person name="Skrzypek M.S."/>
            <person name="Miyasato S.R."/>
            <person name="Simison M."/>
            <person name="Cherry J.M."/>
        </authorList>
    </citation>
    <scope>GENOME REANNOTATION</scope>
    <source>
        <strain>ATCC 204508 / S288c</strain>
    </source>
</reference>
<reference key="3">
    <citation type="journal article" date="2002" name="Nature">
        <title>A large nucleolar U3 ribonucleoprotein required for 18S ribosomal RNA biogenesis.</title>
        <authorList>
            <person name="Dragon F."/>
            <person name="Gallagher J.E.G."/>
            <person name="Compagnone-Post P.A."/>
            <person name="Mitchell B.M."/>
            <person name="Porwancher K.A."/>
            <person name="Wehner K.A."/>
            <person name="Wormsley S."/>
            <person name="Settlage R.E."/>
            <person name="Shabanowitz J."/>
            <person name="Osheim Y."/>
            <person name="Beyer A.L."/>
            <person name="Hunt D.F."/>
            <person name="Baserga S.J."/>
        </authorList>
    </citation>
    <scope>FUNCTION</scope>
    <scope>INTERACTION WITH MPP10 AND SNORNA U3</scope>
    <scope>IDENTIFICATION IN SSU PROCESSOME BY MASS SPECTROMETRY</scope>
    <scope>SUBCELLULAR LOCATION</scope>
</reference>
<reference key="4">
    <citation type="journal article" date="2003" name="Nature">
        <title>Global analysis of protein expression in yeast.</title>
        <authorList>
            <person name="Ghaemmaghami S."/>
            <person name="Huh W.-K."/>
            <person name="Bower K."/>
            <person name="Howson R.W."/>
            <person name="Belle A."/>
            <person name="Dephoure N."/>
            <person name="O'Shea E.K."/>
            <person name="Weissman J.S."/>
        </authorList>
    </citation>
    <scope>LEVEL OF PROTEIN EXPRESSION [LARGE SCALE ANALYSIS]</scope>
</reference>
<reference key="5">
    <citation type="journal article" date="2007" name="J. Proteome Res.">
        <title>Large-scale phosphorylation analysis of alpha-factor-arrested Saccharomyces cerevisiae.</title>
        <authorList>
            <person name="Li X."/>
            <person name="Gerber S.A."/>
            <person name="Rudner A.D."/>
            <person name="Beausoleil S.A."/>
            <person name="Haas W."/>
            <person name="Villen J."/>
            <person name="Elias J.E."/>
            <person name="Gygi S.P."/>
        </authorList>
    </citation>
    <scope>PHOSPHORYLATION [LARGE SCALE ANALYSIS] AT SER-34; SER-151; SER-423; SER-562 AND SER-738</scope>
    <scope>IDENTIFICATION BY MASS SPECTROMETRY [LARGE SCALE ANALYSIS]</scope>
    <source>
        <strain>ADR376</strain>
    </source>
</reference>
<reference key="6">
    <citation type="journal article" date="2007" name="Proc. Natl. Acad. Sci. U.S.A.">
        <title>Analysis of phosphorylation sites on proteins from Saccharomyces cerevisiae by electron transfer dissociation (ETD) mass spectrometry.</title>
        <authorList>
            <person name="Chi A."/>
            <person name="Huttenhower C."/>
            <person name="Geer L.Y."/>
            <person name="Coon J.J."/>
            <person name="Syka J.E.P."/>
            <person name="Bai D.L."/>
            <person name="Shabanowitz J."/>
            <person name="Burke D.J."/>
            <person name="Troyanskaya O.G."/>
            <person name="Hunt D.F."/>
        </authorList>
    </citation>
    <scope>PHOSPHORYLATION [LARGE SCALE ANALYSIS] AT SER-668 AND SER-738</scope>
    <scope>IDENTIFICATION BY MASS SPECTROMETRY [LARGE SCALE ANALYSIS]</scope>
</reference>
<reference key="7">
    <citation type="journal article" date="2008" name="Mol. Cell. Proteomics">
        <title>A multidimensional chromatography technology for in-depth phosphoproteome analysis.</title>
        <authorList>
            <person name="Albuquerque C.P."/>
            <person name="Smolka M.B."/>
            <person name="Payne S.H."/>
            <person name="Bafna V."/>
            <person name="Eng J."/>
            <person name="Zhou H."/>
        </authorList>
    </citation>
    <scope>PHOSPHORYLATION [LARGE SCALE ANALYSIS] AT SER-34; SER-35; SER-151; SER-423; SER-424; SER-488; SER-500; SER-562; SER-668 AND SER-738</scope>
    <scope>IDENTIFICATION BY MASS SPECTROMETRY [LARGE SCALE ANALYSIS]</scope>
</reference>
<reference key="8">
    <citation type="journal article" date="2009" name="Science">
        <title>Global analysis of Cdk1 substrate phosphorylation sites provides insights into evolution.</title>
        <authorList>
            <person name="Holt L.J."/>
            <person name="Tuch B.B."/>
            <person name="Villen J."/>
            <person name="Johnson A.D."/>
            <person name="Gygi S.P."/>
            <person name="Morgan D.O."/>
        </authorList>
    </citation>
    <scope>PHOSPHORYLATION [LARGE SCALE ANALYSIS] AT SER-34; SER-151; SER-423; SER-488; SER-500; SER-562 AND SER-738</scope>
    <scope>IDENTIFICATION BY MASS SPECTROMETRY [LARGE SCALE ANALYSIS]</scope>
</reference>
<reference key="9">
    <citation type="journal article" date="2012" name="Proc. Natl. Acad. Sci. U.S.A.">
        <title>N-terminal acetylome analyses and functional insights of the N-terminal acetyltransferase NatB.</title>
        <authorList>
            <person name="Van Damme P."/>
            <person name="Lasa M."/>
            <person name="Polevoda B."/>
            <person name="Gazquez C."/>
            <person name="Elosegui-Artola A."/>
            <person name="Kim D.S."/>
            <person name="De Juan-Pardo E."/>
            <person name="Demeyer K."/>
            <person name="Hole K."/>
            <person name="Larrea E."/>
            <person name="Timmerman E."/>
            <person name="Prieto J."/>
            <person name="Arnesen T."/>
            <person name="Sherman F."/>
            <person name="Gevaert K."/>
            <person name="Aldabe R."/>
        </authorList>
    </citation>
    <scope>IDENTIFICATION BY MASS SPECTROMETRY [LARGE SCALE ANALYSIS]</scope>
</reference>
<accession>Q04500</accession>
<accession>D6W0J2</accession>
<protein>
    <recommendedName>
        <fullName>U3 small nucleolar RNA-associated protein 14</fullName>
        <shortName>U3 snoRNA-associated protein 14</shortName>
    </recommendedName>
    <alternativeName>
        <fullName>U three protein 14</fullName>
    </alternativeName>
</protein>
<keyword id="KW-0002">3D-structure</keyword>
<keyword id="KW-0067">ATP-binding</keyword>
<keyword id="KW-0547">Nucleotide-binding</keyword>
<keyword id="KW-0539">Nucleus</keyword>
<keyword id="KW-0597">Phosphoprotein</keyword>
<keyword id="KW-1185">Reference proteome</keyword>
<keyword id="KW-0687">Ribonucleoprotein</keyword>
<keyword id="KW-0690">Ribosome biogenesis</keyword>
<keyword id="KW-0698">rRNA processing</keyword>
<proteinExistence type="evidence at protein level"/>
<feature type="chain" id="PRO_0000065742" description="U3 small nucleolar RNA-associated protein 14">
    <location>
        <begin position="1"/>
        <end position="899"/>
    </location>
</feature>
<feature type="region of interest" description="Disordered" evidence="2">
    <location>
        <begin position="1"/>
        <end position="197"/>
    </location>
</feature>
<feature type="region of interest" description="Disordered" evidence="2">
    <location>
        <begin position="485"/>
        <end position="509"/>
    </location>
</feature>
<feature type="region of interest" description="Disordered" evidence="2">
    <location>
        <begin position="559"/>
        <end position="721"/>
    </location>
</feature>
<feature type="region of interest" description="Disordered" evidence="2">
    <location>
        <begin position="776"/>
        <end position="805"/>
    </location>
</feature>
<feature type="compositionally biased region" description="Basic residues" evidence="2">
    <location>
        <begin position="1"/>
        <end position="14"/>
    </location>
</feature>
<feature type="compositionally biased region" description="Basic and acidic residues" evidence="2">
    <location>
        <begin position="36"/>
        <end position="45"/>
    </location>
</feature>
<feature type="compositionally biased region" description="Acidic residues" evidence="2">
    <location>
        <begin position="61"/>
        <end position="90"/>
    </location>
</feature>
<feature type="compositionally biased region" description="Acidic residues" evidence="2">
    <location>
        <begin position="110"/>
        <end position="126"/>
    </location>
</feature>
<feature type="compositionally biased region" description="Acidic residues" evidence="2">
    <location>
        <begin position="167"/>
        <end position="196"/>
    </location>
</feature>
<feature type="compositionally biased region" description="Basic and acidic residues" evidence="2">
    <location>
        <begin position="588"/>
        <end position="615"/>
    </location>
</feature>
<feature type="compositionally biased region" description="Polar residues" evidence="2">
    <location>
        <begin position="619"/>
        <end position="628"/>
    </location>
</feature>
<feature type="compositionally biased region" description="Basic and acidic residues" evidence="2">
    <location>
        <begin position="683"/>
        <end position="704"/>
    </location>
</feature>
<feature type="binding site" evidence="1">
    <location>
        <begin position="260"/>
        <end position="267"/>
    </location>
    <ligand>
        <name>ATP</name>
        <dbReference type="ChEBI" id="CHEBI:30616"/>
    </ligand>
</feature>
<feature type="modified residue" description="Phosphoserine" evidence="7 8 9">
    <location>
        <position position="34"/>
    </location>
</feature>
<feature type="modified residue" description="Phosphoserine" evidence="8">
    <location>
        <position position="35"/>
    </location>
</feature>
<feature type="modified residue" description="Phosphoserine" evidence="7 8 9">
    <location>
        <position position="151"/>
    </location>
</feature>
<feature type="modified residue" description="Phosphoserine" evidence="7 8 9">
    <location>
        <position position="423"/>
    </location>
</feature>
<feature type="modified residue" description="Phosphoserine" evidence="8">
    <location>
        <position position="424"/>
    </location>
</feature>
<feature type="modified residue" description="Phosphoserine" evidence="8 9">
    <location>
        <position position="488"/>
    </location>
</feature>
<feature type="modified residue" description="Phosphoserine" evidence="8 9">
    <location>
        <position position="500"/>
    </location>
</feature>
<feature type="modified residue" description="Phosphoserine" evidence="7 8 9">
    <location>
        <position position="562"/>
    </location>
</feature>
<feature type="modified residue" description="Phosphoserine" evidence="6 8">
    <location>
        <position position="668"/>
    </location>
</feature>
<feature type="modified residue" description="Phosphoserine" evidence="6 7 8 9">
    <location>
        <position position="738"/>
    </location>
</feature>
<organism>
    <name type="scientific">Saccharomyces cerevisiae (strain ATCC 204508 / S288c)</name>
    <name type="common">Baker's yeast</name>
    <dbReference type="NCBI Taxonomy" id="559292"/>
    <lineage>
        <taxon>Eukaryota</taxon>
        <taxon>Fungi</taxon>
        <taxon>Dikarya</taxon>
        <taxon>Ascomycota</taxon>
        <taxon>Saccharomycotina</taxon>
        <taxon>Saccharomycetes</taxon>
        <taxon>Saccharomycetales</taxon>
        <taxon>Saccharomycetaceae</taxon>
        <taxon>Saccharomyces</taxon>
    </lineage>
</organism>
<comment type="function">
    <text evidence="3">Involved in nucleolar processing of pre-18S ribosomal RNA.</text>
</comment>
<comment type="subunit">
    <text evidence="3">Interacts with snoRNA U3. Interacts with MPP10. Component of the ribosomal small subunit (SSU) processome composed of at least 40 protein subunits and snoRNA U3.</text>
</comment>
<comment type="interaction">
    <interactant intactId="EBI-27917">
        <id>Q04500</id>
    </interactant>
    <interactant intactId="EBI-1820">
        <id>Q04217</id>
        <label>ECM16</label>
    </interactant>
    <organismsDiffer>false</organismsDiffer>
    <experiments>3</experiments>
</comment>
<comment type="interaction">
    <interactant intactId="EBI-27917">
        <id>Q04500</id>
    </interactant>
    <interactant intactId="EBI-21773">
        <id>P25586</id>
        <label>KRR1</label>
    </interactant>
    <organismsDiffer>false</organismsDiffer>
    <experiments>3</experiments>
</comment>
<comment type="subcellular location">
    <subcellularLocation>
        <location evidence="3">Nucleus</location>
        <location evidence="3">Nucleolus</location>
    </subcellularLocation>
</comment>
<comment type="miscellaneous">
    <text evidence="4">Present with 1470 molecules/cell in log phase SD medium.</text>
</comment>
<comment type="similarity">
    <text evidence="5">Belongs to the UTP14 family.</text>
</comment>
<dbReference type="EMBL" id="Z46660">
    <property type="protein sequence ID" value="CAA86645.1"/>
    <property type="molecule type" value="Genomic_DNA"/>
</dbReference>
<dbReference type="EMBL" id="BK006946">
    <property type="protein sequence ID" value="DAA09806.1"/>
    <property type="molecule type" value="Genomic_DNA"/>
</dbReference>
<dbReference type="PIR" id="S49634">
    <property type="entry name" value="S49634"/>
</dbReference>
<dbReference type="RefSeq" id="NP_013617.1">
    <property type="nucleotide sequence ID" value="NM_001182452.1"/>
</dbReference>
<dbReference type="PDB" id="5WLC">
    <property type="method" value="EM"/>
    <property type="resolution" value="3.80 A"/>
    <property type="chains" value="SS=1-899"/>
</dbReference>
<dbReference type="PDB" id="6KE6">
    <property type="method" value="EM"/>
    <property type="resolution" value="3.40 A"/>
    <property type="chains" value="RQ=1-899"/>
</dbReference>
<dbReference type="PDB" id="6LQP">
    <property type="method" value="EM"/>
    <property type="resolution" value="3.20 A"/>
    <property type="chains" value="RQ=1-899"/>
</dbReference>
<dbReference type="PDB" id="6LQQ">
    <property type="method" value="EM"/>
    <property type="resolution" value="4.10 A"/>
    <property type="chains" value="RQ=1-899"/>
</dbReference>
<dbReference type="PDB" id="6LQR">
    <property type="method" value="EM"/>
    <property type="resolution" value="8.60 A"/>
    <property type="chains" value="RQ=1-899"/>
</dbReference>
<dbReference type="PDB" id="6LQS">
    <property type="method" value="EM"/>
    <property type="resolution" value="3.80 A"/>
    <property type="chains" value="RQ=1-899"/>
</dbReference>
<dbReference type="PDB" id="6LQT">
    <property type="method" value="EM"/>
    <property type="resolution" value="4.90 A"/>
    <property type="chains" value="RQ=1-899"/>
</dbReference>
<dbReference type="PDB" id="6LQU">
    <property type="method" value="EM"/>
    <property type="resolution" value="3.70 A"/>
    <property type="chains" value="RQ=1-899"/>
</dbReference>
<dbReference type="PDB" id="6LQV">
    <property type="method" value="EM"/>
    <property type="resolution" value="4.80 A"/>
    <property type="chains" value="RQ=1-899"/>
</dbReference>
<dbReference type="PDB" id="6ZQA">
    <property type="method" value="EM"/>
    <property type="resolution" value="4.40 A"/>
    <property type="chains" value="UN=1-899"/>
</dbReference>
<dbReference type="PDB" id="6ZQB">
    <property type="method" value="EM"/>
    <property type="resolution" value="3.90 A"/>
    <property type="chains" value="UN=276-897"/>
</dbReference>
<dbReference type="PDB" id="6ZQC">
    <property type="method" value="EM"/>
    <property type="resolution" value="3.80 A"/>
    <property type="chains" value="UN=1-899"/>
</dbReference>
<dbReference type="PDB" id="6ZQD">
    <property type="method" value="EM"/>
    <property type="resolution" value="3.80 A"/>
    <property type="chains" value="UN=1-899"/>
</dbReference>
<dbReference type="PDB" id="6ZQE">
    <property type="method" value="EM"/>
    <property type="resolution" value="7.10 A"/>
    <property type="chains" value="UN=786-800"/>
</dbReference>
<dbReference type="PDB" id="6ZQG">
    <property type="method" value="EM"/>
    <property type="resolution" value="3.50 A"/>
    <property type="chains" value="UN=1-899"/>
</dbReference>
<dbReference type="PDB" id="7AJT">
    <property type="method" value="EM"/>
    <property type="resolution" value="4.60 A"/>
    <property type="chains" value="UN=1-899"/>
</dbReference>
<dbReference type="PDB" id="7AJU">
    <property type="method" value="EM"/>
    <property type="resolution" value="3.80 A"/>
    <property type="chains" value="UN=1-899"/>
</dbReference>
<dbReference type="PDB" id="7D4I">
    <property type="method" value="EM"/>
    <property type="resolution" value="4.00 A"/>
    <property type="chains" value="RQ=1-899"/>
</dbReference>
<dbReference type="PDB" id="7D5S">
    <property type="method" value="EM"/>
    <property type="resolution" value="4.60 A"/>
    <property type="chains" value="RQ=1-899"/>
</dbReference>
<dbReference type="PDB" id="7D5T">
    <property type="method" value="EM"/>
    <property type="resolution" value="6.00 A"/>
    <property type="chains" value="RQ=1-899"/>
</dbReference>
<dbReference type="PDB" id="7D63">
    <property type="method" value="EM"/>
    <property type="resolution" value="12.30 A"/>
    <property type="chains" value="RQ=1-899"/>
</dbReference>
<dbReference type="PDB" id="7SUK">
    <property type="method" value="EM"/>
    <property type="resolution" value="3.99 A"/>
    <property type="chains" value="SS=276-350"/>
</dbReference>
<dbReference type="PDBsum" id="5WLC"/>
<dbReference type="PDBsum" id="6KE6"/>
<dbReference type="PDBsum" id="6LQP"/>
<dbReference type="PDBsum" id="6LQQ"/>
<dbReference type="PDBsum" id="6LQR"/>
<dbReference type="PDBsum" id="6LQS"/>
<dbReference type="PDBsum" id="6LQT"/>
<dbReference type="PDBsum" id="6LQU"/>
<dbReference type="PDBsum" id="6LQV"/>
<dbReference type="PDBsum" id="6ZQA"/>
<dbReference type="PDBsum" id="6ZQB"/>
<dbReference type="PDBsum" id="6ZQC"/>
<dbReference type="PDBsum" id="6ZQD"/>
<dbReference type="PDBsum" id="6ZQE"/>
<dbReference type="PDBsum" id="6ZQG"/>
<dbReference type="PDBsum" id="7AJT"/>
<dbReference type="PDBsum" id="7AJU"/>
<dbReference type="PDBsum" id="7D4I"/>
<dbReference type="PDBsum" id="7D5S"/>
<dbReference type="PDBsum" id="7D5T"/>
<dbReference type="PDBsum" id="7D63"/>
<dbReference type="PDBsum" id="7SUK"/>
<dbReference type="EMDB" id="EMD-0949"/>
<dbReference type="EMDB" id="EMD-0950"/>
<dbReference type="EMDB" id="EMD-0951"/>
<dbReference type="EMDB" id="EMD-0952"/>
<dbReference type="EMDB" id="EMD-0953"/>
<dbReference type="EMDB" id="EMD-0954"/>
<dbReference type="EMDB" id="EMD-0955"/>
<dbReference type="EMDB" id="EMD-11357"/>
<dbReference type="EMDB" id="EMD-11358"/>
<dbReference type="EMDB" id="EMD-11359"/>
<dbReference type="EMDB" id="EMD-11360"/>
<dbReference type="EMDB" id="EMD-11361"/>
<dbReference type="EMDB" id="EMD-11363"/>
<dbReference type="EMDB" id="EMD-11807"/>
<dbReference type="EMDB" id="EMD-11808"/>
<dbReference type="EMDB" id="EMD-25441"/>
<dbReference type="EMDB" id="EMD-30574"/>
<dbReference type="EMDB" id="EMD-30584"/>
<dbReference type="EMDB" id="EMD-30585"/>
<dbReference type="EMDB" id="EMD-30588"/>
<dbReference type="EMDB" id="EMD-8859"/>
<dbReference type="EMDB" id="EMD-9964"/>
<dbReference type="SMR" id="Q04500"/>
<dbReference type="BioGRID" id="35050">
    <property type="interactions" value="268"/>
</dbReference>
<dbReference type="ComplexPortal" id="CPX-1604">
    <property type="entry name" value="Small ribosomal subunit processome"/>
</dbReference>
<dbReference type="DIP" id="DIP-6410N"/>
<dbReference type="FunCoup" id="Q04500">
    <property type="interactions" value="1004"/>
</dbReference>
<dbReference type="IntAct" id="Q04500">
    <property type="interactions" value="79"/>
</dbReference>
<dbReference type="MINT" id="Q04500"/>
<dbReference type="STRING" id="4932.YML093W"/>
<dbReference type="GlyGen" id="Q04500">
    <property type="glycosylation" value="2 sites, 1 O-linked glycan (2 sites)"/>
</dbReference>
<dbReference type="iPTMnet" id="Q04500"/>
<dbReference type="PaxDb" id="4932-YML093W"/>
<dbReference type="PeptideAtlas" id="Q04500"/>
<dbReference type="EnsemblFungi" id="YML093W_mRNA">
    <property type="protein sequence ID" value="YML093W"/>
    <property type="gene ID" value="YML093W"/>
</dbReference>
<dbReference type="GeneID" id="854881"/>
<dbReference type="KEGG" id="sce:YML093W"/>
<dbReference type="AGR" id="SGD:S000004558"/>
<dbReference type="SGD" id="S000004558">
    <property type="gene designation" value="UTP14"/>
</dbReference>
<dbReference type="VEuPathDB" id="FungiDB:YML093W"/>
<dbReference type="eggNOG" id="KOG2172">
    <property type="taxonomic scope" value="Eukaryota"/>
</dbReference>
<dbReference type="GeneTree" id="ENSGT00390000008142"/>
<dbReference type="HOGENOM" id="CLU_003783_0_2_1"/>
<dbReference type="InParanoid" id="Q04500"/>
<dbReference type="OMA" id="QVIEPMD"/>
<dbReference type="OrthoDB" id="277439at2759"/>
<dbReference type="BioCyc" id="YEAST:G3O-32678-MONOMER"/>
<dbReference type="Reactome" id="R-SCE-6791226">
    <property type="pathway name" value="Major pathway of rRNA processing in the nucleolus and cytosol"/>
</dbReference>
<dbReference type="BioGRID-ORCS" id="854881">
    <property type="hits" value="4 hits in 10 CRISPR screens"/>
</dbReference>
<dbReference type="CD-CODE" id="BDAE0F88">
    <property type="entry name" value="Nucleolus"/>
</dbReference>
<dbReference type="PRO" id="PR:Q04500"/>
<dbReference type="Proteomes" id="UP000002311">
    <property type="component" value="Chromosome XIII"/>
</dbReference>
<dbReference type="RNAct" id="Q04500">
    <property type="molecule type" value="protein"/>
</dbReference>
<dbReference type="GO" id="GO:0005730">
    <property type="term" value="C:nucleolus"/>
    <property type="evidence" value="ECO:0000314"/>
    <property type="project" value="SGD"/>
</dbReference>
<dbReference type="GO" id="GO:0005654">
    <property type="term" value="C:nucleoplasm"/>
    <property type="evidence" value="ECO:0000304"/>
    <property type="project" value="Reactome"/>
</dbReference>
<dbReference type="GO" id="GO:0032040">
    <property type="term" value="C:small-subunit processome"/>
    <property type="evidence" value="ECO:0000314"/>
    <property type="project" value="SGD"/>
</dbReference>
<dbReference type="GO" id="GO:0005524">
    <property type="term" value="F:ATP binding"/>
    <property type="evidence" value="ECO:0007669"/>
    <property type="project" value="UniProtKB-KW"/>
</dbReference>
<dbReference type="GO" id="GO:0000480">
    <property type="term" value="P:endonucleolytic cleavage in 5'-ETS of tricistronic rRNA transcript (SSU-rRNA, 5.8S rRNA, LSU-rRNA)"/>
    <property type="evidence" value="ECO:0000315"/>
    <property type="project" value="SGD"/>
</dbReference>
<dbReference type="GO" id="GO:0000447">
    <property type="term" value="P:endonucleolytic cleavage in ITS1 to separate SSU-rRNA from 5.8S rRNA and LSU-rRNA from tricistronic rRNA transcript (SSU-rRNA, 5.8S rRNA, LSU-rRNA)"/>
    <property type="evidence" value="ECO:0000315"/>
    <property type="project" value="SGD"/>
</dbReference>
<dbReference type="GO" id="GO:0000472">
    <property type="term" value="P:endonucleolytic cleavage to generate mature 5'-end of SSU-rRNA from (SSU-rRNA, 5.8S rRNA, LSU-rRNA)"/>
    <property type="evidence" value="ECO:0000315"/>
    <property type="project" value="SGD"/>
</dbReference>
<dbReference type="GO" id="GO:0030490">
    <property type="term" value="P:maturation of SSU-rRNA"/>
    <property type="evidence" value="ECO:0000303"/>
    <property type="project" value="ComplexPortal"/>
</dbReference>
<dbReference type="InterPro" id="IPR006709">
    <property type="entry name" value="SSU_processome_Utp14"/>
</dbReference>
<dbReference type="PANTHER" id="PTHR14150">
    <property type="entry name" value="U3 SMALL NUCLEOLAR RNA-ASSOCIATED PROTEIN 14"/>
    <property type="match status" value="1"/>
</dbReference>
<dbReference type="PANTHER" id="PTHR14150:SF12">
    <property type="entry name" value="U3 SMALL NUCLEOLAR RNA-ASSOCIATED PROTEIN 14 HOMOLOG A"/>
    <property type="match status" value="1"/>
</dbReference>
<dbReference type="Pfam" id="PF04615">
    <property type="entry name" value="Utp14"/>
    <property type="match status" value="1"/>
</dbReference>
<gene>
    <name type="primary">UTP14</name>
    <name type="ordered locus">YML093W</name>
</gene>
<evidence type="ECO:0000255" key="1"/>
<evidence type="ECO:0000256" key="2">
    <source>
        <dbReference type="SAM" id="MobiDB-lite"/>
    </source>
</evidence>
<evidence type="ECO:0000269" key="3">
    <source>
    </source>
</evidence>
<evidence type="ECO:0000269" key="4">
    <source>
    </source>
</evidence>
<evidence type="ECO:0000305" key="5"/>
<evidence type="ECO:0007744" key="6">
    <source>
    </source>
</evidence>
<evidence type="ECO:0007744" key="7">
    <source>
    </source>
</evidence>
<evidence type="ECO:0007744" key="8">
    <source>
    </source>
</evidence>
<evidence type="ECO:0007744" key="9">
    <source>
    </source>
</evidence>
<name>UTP14_YEAST</name>